<keyword id="KW-0028">Amino-acid biosynthesis</keyword>
<keyword id="KW-0055">Arginine biosynthesis</keyword>
<keyword id="KW-0963">Cytoplasm</keyword>
<keyword id="KW-0521">NADP</keyword>
<keyword id="KW-0560">Oxidoreductase</keyword>
<keyword id="KW-1185">Reference proteome</keyword>
<organism>
    <name type="scientific">Aquifex aeolicus (strain VF5)</name>
    <dbReference type="NCBI Taxonomy" id="224324"/>
    <lineage>
        <taxon>Bacteria</taxon>
        <taxon>Pseudomonadati</taxon>
        <taxon>Aquificota</taxon>
        <taxon>Aquificia</taxon>
        <taxon>Aquificales</taxon>
        <taxon>Aquificaceae</taxon>
        <taxon>Aquifex</taxon>
    </lineage>
</organism>
<accession>O67724</accession>
<sequence length="340" mass="38958">MEQTLRVSVFGATGYTGIELLRSLLTHPHFEVKNLISQSYKGKKVREVLPFFSNTYISEIEFLEEPVEDYELAFLCLPHEVSYEIVPKLLSQGKKVVDLSGAYRIKSPKAYEEFYGFKHEREDILQRAVYGLPEVFREEIKNSDLVANPGCYPTATLLAIYPFLKERVGIESVIVHALSGVSGAGRKPKQQFHFPEMTENFFNYAVEKHRHTPEMEDVIRRVYGREVKVRFTPTVVPTSRGMISTVYLKSEKLNVKELFKEVYEDEIFVKVVDEPPQTKWVLGTNYCFIYPHYDERTGYYVIISAIDNLGKGASLQAVQNANLMFGLAEDDGLLQLPVFP</sequence>
<gene>
    <name evidence="1" type="primary">argC</name>
    <name type="ordered locus">aq_1879</name>
</gene>
<evidence type="ECO:0000255" key="1">
    <source>
        <dbReference type="HAMAP-Rule" id="MF_00150"/>
    </source>
</evidence>
<proteinExistence type="inferred from homology"/>
<comment type="function">
    <text evidence="1">Catalyzes the NADPH-dependent reduction of N-acetyl-5-glutamyl phosphate to yield N-acetyl-L-glutamate 5-semialdehyde.</text>
</comment>
<comment type="catalytic activity">
    <reaction evidence="1">
        <text>N-acetyl-L-glutamate 5-semialdehyde + phosphate + NADP(+) = N-acetyl-L-glutamyl 5-phosphate + NADPH + H(+)</text>
        <dbReference type="Rhea" id="RHEA:21588"/>
        <dbReference type="ChEBI" id="CHEBI:15378"/>
        <dbReference type="ChEBI" id="CHEBI:29123"/>
        <dbReference type="ChEBI" id="CHEBI:43474"/>
        <dbReference type="ChEBI" id="CHEBI:57783"/>
        <dbReference type="ChEBI" id="CHEBI:57936"/>
        <dbReference type="ChEBI" id="CHEBI:58349"/>
        <dbReference type="EC" id="1.2.1.38"/>
    </reaction>
</comment>
<comment type="pathway">
    <text evidence="1">Amino-acid biosynthesis; L-arginine biosynthesis; N(2)-acetyl-L-ornithine from L-glutamate: step 3/4.</text>
</comment>
<comment type="subcellular location">
    <subcellularLocation>
        <location evidence="1">Cytoplasm</location>
    </subcellularLocation>
</comment>
<comment type="similarity">
    <text evidence="1">Belongs to the NAGSA dehydrogenase family. Type 1 subfamily.</text>
</comment>
<dbReference type="EC" id="1.2.1.38" evidence="1"/>
<dbReference type="EMBL" id="AE000657">
    <property type="protein sequence ID" value="AAC07684.1"/>
    <property type="molecule type" value="Genomic_DNA"/>
</dbReference>
<dbReference type="PIR" id="B70462">
    <property type="entry name" value="B70462"/>
</dbReference>
<dbReference type="RefSeq" id="NP_214292.1">
    <property type="nucleotide sequence ID" value="NC_000918.1"/>
</dbReference>
<dbReference type="RefSeq" id="WP_010881228.1">
    <property type="nucleotide sequence ID" value="NC_000918.1"/>
</dbReference>
<dbReference type="SMR" id="O67724"/>
<dbReference type="FunCoup" id="O67724">
    <property type="interactions" value="281"/>
</dbReference>
<dbReference type="STRING" id="224324.aq_1879"/>
<dbReference type="EnsemblBacteria" id="AAC07684">
    <property type="protein sequence ID" value="AAC07684"/>
    <property type="gene ID" value="aq_1879"/>
</dbReference>
<dbReference type="KEGG" id="aae:aq_1879"/>
<dbReference type="PATRIC" id="fig|224324.8.peg.1457"/>
<dbReference type="eggNOG" id="COG0002">
    <property type="taxonomic scope" value="Bacteria"/>
</dbReference>
<dbReference type="HOGENOM" id="CLU_006384_0_1_0"/>
<dbReference type="InParanoid" id="O67724"/>
<dbReference type="OrthoDB" id="9801289at2"/>
<dbReference type="UniPathway" id="UPA00068">
    <property type="reaction ID" value="UER00108"/>
</dbReference>
<dbReference type="Proteomes" id="UP000000798">
    <property type="component" value="Chromosome"/>
</dbReference>
<dbReference type="GO" id="GO:0005737">
    <property type="term" value="C:cytoplasm"/>
    <property type="evidence" value="ECO:0007669"/>
    <property type="project" value="UniProtKB-SubCell"/>
</dbReference>
<dbReference type="GO" id="GO:0003942">
    <property type="term" value="F:N-acetyl-gamma-glutamyl-phosphate reductase activity"/>
    <property type="evidence" value="ECO:0007669"/>
    <property type="project" value="UniProtKB-UniRule"/>
</dbReference>
<dbReference type="GO" id="GO:0051287">
    <property type="term" value="F:NAD binding"/>
    <property type="evidence" value="ECO:0007669"/>
    <property type="project" value="InterPro"/>
</dbReference>
<dbReference type="GO" id="GO:0070401">
    <property type="term" value="F:NADP+ binding"/>
    <property type="evidence" value="ECO:0007669"/>
    <property type="project" value="InterPro"/>
</dbReference>
<dbReference type="GO" id="GO:0006526">
    <property type="term" value="P:L-arginine biosynthetic process"/>
    <property type="evidence" value="ECO:0007669"/>
    <property type="project" value="UniProtKB-UniRule"/>
</dbReference>
<dbReference type="CDD" id="cd23934">
    <property type="entry name" value="AGPR_1_C"/>
    <property type="match status" value="1"/>
</dbReference>
<dbReference type="CDD" id="cd17895">
    <property type="entry name" value="AGPR_1_N"/>
    <property type="match status" value="1"/>
</dbReference>
<dbReference type="Gene3D" id="3.30.360.10">
    <property type="entry name" value="Dihydrodipicolinate Reductase, domain 2"/>
    <property type="match status" value="1"/>
</dbReference>
<dbReference type="Gene3D" id="3.40.50.720">
    <property type="entry name" value="NAD(P)-binding Rossmann-like Domain"/>
    <property type="match status" value="1"/>
</dbReference>
<dbReference type="HAMAP" id="MF_00150">
    <property type="entry name" value="ArgC_type1"/>
    <property type="match status" value="1"/>
</dbReference>
<dbReference type="InterPro" id="IPR023013">
    <property type="entry name" value="AGPR_AS"/>
</dbReference>
<dbReference type="InterPro" id="IPR000706">
    <property type="entry name" value="AGPR_type-1"/>
</dbReference>
<dbReference type="InterPro" id="IPR036291">
    <property type="entry name" value="NAD(P)-bd_dom_sf"/>
</dbReference>
<dbReference type="InterPro" id="IPR050085">
    <property type="entry name" value="NAGSA_dehydrogenase"/>
</dbReference>
<dbReference type="InterPro" id="IPR000534">
    <property type="entry name" value="Semialdehyde_DH_NAD-bd"/>
</dbReference>
<dbReference type="NCBIfam" id="TIGR01850">
    <property type="entry name" value="argC"/>
    <property type="match status" value="1"/>
</dbReference>
<dbReference type="PANTHER" id="PTHR32338:SF10">
    <property type="entry name" value="N-ACETYL-GAMMA-GLUTAMYL-PHOSPHATE REDUCTASE, CHLOROPLASTIC-RELATED"/>
    <property type="match status" value="1"/>
</dbReference>
<dbReference type="PANTHER" id="PTHR32338">
    <property type="entry name" value="N-ACETYL-GAMMA-GLUTAMYL-PHOSPHATE REDUCTASE, CHLOROPLASTIC-RELATED-RELATED"/>
    <property type="match status" value="1"/>
</dbReference>
<dbReference type="Pfam" id="PF01118">
    <property type="entry name" value="Semialdhyde_dh"/>
    <property type="match status" value="1"/>
</dbReference>
<dbReference type="Pfam" id="PF22698">
    <property type="entry name" value="Semialdhyde_dhC_1"/>
    <property type="match status" value="1"/>
</dbReference>
<dbReference type="SMART" id="SM00859">
    <property type="entry name" value="Semialdhyde_dh"/>
    <property type="match status" value="1"/>
</dbReference>
<dbReference type="SUPFAM" id="SSF55347">
    <property type="entry name" value="Glyceraldehyde-3-phosphate dehydrogenase-like, C-terminal domain"/>
    <property type="match status" value="1"/>
</dbReference>
<dbReference type="SUPFAM" id="SSF51735">
    <property type="entry name" value="NAD(P)-binding Rossmann-fold domains"/>
    <property type="match status" value="1"/>
</dbReference>
<dbReference type="PROSITE" id="PS01224">
    <property type="entry name" value="ARGC"/>
    <property type="match status" value="1"/>
</dbReference>
<feature type="chain" id="PRO_0000112375" description="N-acetyl-gamma-glutamyl-phosphate reductase">
    <location>
        <begin position="1"/>
        <end position="340"/>
    </location>
</feature>
<feature type="active site" evidence="1">
    <location>
        <position position="151"/>
    </location>
</feature>
<name>ARGC_AQUAE</name>
<protein>
    <recommendedName>
        <fullName evidence="1">N-acetyl-gamma-glutamyl-phosphate reductase</fullName>
        <shortName evidence="1">AGPR</shortName>
        <ecNumber evidence="1">1.2.1.38</ecNumber>
    </recommendedName>
    <alternativeName>
        <fullName evidence="1">N-acetyl-glutamate semialdehyde dehydrogenase</fullName>
        <shortName evidence="1">NAGSA dehydrogenase</shortName>
    </alternativeName>
</protein>
<reference key="1">
    <citation type="journal article" date="1998" name="Nature">
        <title>The complete genome of the hyperthermophilic bacterium Aquifex aeolicus.</title>
        <authorList>
            <person name="Deckert G."/>
            <person name="Warren P.V."/>
            <person name="Gaasterland T."/>
            <person name="Young W.G."/>
            <person name="Lenox A.L."/>
            <person name="Graham D.E."/>
            <person name="Overbeek R."/>
            <person name="Snead M.A."/>
            <person name="Keller M."/>
            <person name="Aujay M."/>
            <person name="Huber R."/>
            <person name="Feldman R.A."/>
            <person name="Short J.M."/>
            <person name="Olsen G.J."/>
            <person name="Swanson R.V."/>
        </authorList>
    </citation>
    <scope>NUCLEOTIDE SEQUENCE [LARGE SCALE GENOMIC DNA]</scope>
    <source>
        <strain>VF5</strain>
    </source>
</reference>